<organism>
    <name type="scientific">Toxoplasma gondii</name>
    <dbReference type="NCBI Taxonomy" id="5811"/>
    <lineage>
        <taxon>Eukaryota</taxon>
        <taxon>Sar</taxon>
        <taxon>Alveolata</taxon>
        <taxon>Apicomplexa</taxon>
        <taxon>Conoidasida</taxon>
        <taxon>Coccidia</taxon>
        <taxon>Eucoccidiorida</taxon>
        <taxon>Eimeriorina</taxon>
        <taxon>Sarcocystidae</taxon>
        <taxon>Toxoplasma</taxon>
    </lineage>
</organism>
<feature type="chain" id="PRO_0000084913" description="Peroxisomal catalase">
    <location>
        <begin position="1"/>
        <end position="502"/>
    </location>
</feature>
<feature type="short sequence motif" description="Microbody targeting signal" evidence="3">
    <location>
        <begin position="500"/>
        <end position="502"/>
    </location>
</feature>
<feature type="active site" evidence="4">
    <location>
        <position position="64"/>
    </location>
</feature>
<feature type="active site" evidence="4">
    <location>
        <position position="137"/>
    </location>
</feature>
<feature type="binding site" description="axial binding residue" evidence="1">
    <location>
        <position position="347"/>
    </location>
    <ligand>
        <name>heme</name>
        <dbReference type="ChEBI" id="CHEBI:30413"/>
    </ligand>
    <ligandPart>
        <name>Fe</name>
        <dbReference type="ChEBI" id="CHEBI:18248"/>
    </ligandPart>
</feature>
<keyword id="KW-0349">Heme</keyword>
<keyword id="KW-0376">Hydrogen peroxide</keyword>
<keyword id="KW-0408">Iron</keyword>
<keyword id="KW-0479">Metal-binding</keyword>
<keyword id="KW-0560">Oxidoreductase</keyword>
<keyword id="KW-0575">Peroxidase</keyword>
<keyword id="KW-0576">Peroxisome</keyword>
<reference key="1">
    <citation type="journal article" date="2000" name="J. Biol. Chem.">
        <title>Targeting and subcellular localization of Toxoplasma gondii catalase. Identification of peroxisomes in an apicomplexan parasite.</title>
        <authorList>
            <person name="Kaasch A.J."/>
            <person name="Joiner K.A."/>
        </authorList>
    </citation>
    <scope>NUCLEOTIDE SEQUENCE [MRNA]</scope>
    <source>
        <strain>RH</strain>
    </source>
</reference>
<reference key="2">
    <citation type="journal article" date="2000" name="J. Cell Sci.">
        <title>Toxoplasma gondii catalase: are there peroxisomes in toxoplasma?</title>
        <authorList>
            <person name="Ding M."/>
            <person name="Clayton C."/>
            <person name="Soldati D."/>
        </authorList>
    </citation>
    <scope>NUCLEOTIDE SEQUENCE [GENOMIC DNA]</scope>
    <source>
        <strain>RH</strain>
    </source>
</reference>
<proteinExistence type="evidence at transcript level"/>
<dbReference type="EC" id="1.11.1.6" evidence="4"/>
<dbReference type="EMBL" id="AF136344">
    <property type="protein sequence ID" value="AAD30129.1"/>
    <property type="molecule type" value="mRNA"/>
</dbReference>
<dbReference type="EMBL" id="AF161267">
    <property type="protein sequence ID" value="AAD45528.2"/>
    <property type="molecule type" value="Genomic_DNA"/>
</dbReference>
<dbReference type="SMR" id="Q9XZD5"/>
<dbReference type="PeroxiBase" id="8428">
    <property type="entry name" value="TgKat01"/>
</dbReference>
<dbReference type="VEuPathDB" id="ToxoDB:TGARI_232250"/>
<dbReference type="VEuPathDB" id="ToxoDB:TGCAST_232250"/>
<dbReference type="VEuPathDB" id="ToxoDB:TGCOUG_232250"/>
<dbReference type="VEuPathDB" id="ToxoDB:TGDOM2_232250"/>
<dbReference type="VEuPathDB" id="ToxoDB:TGFOU_232250"/>
<dbReference type="VEuPathDB" id="ToxoDB:TGGT1_232250"/>
<dbReference type="VEuPathDB" id="ToxoDB:TGMAS_232250"/>
<dbReference type="VEuPathDB" id="ToxoDB:TGME49_232250"/>
<dbReference type="VEuPathDB" id="ToxoDB:TGP89_232250A"/>
<dbReference type="VEuPathDB" id="ToxoDB:TGPRC2_232250"/>
<dbReference type="VEuPathDB" id="ToxoDB:TGRH88_076380"/>
<dbReference type="VEuPathDB" id="ToxoDB:TGRUB_232250"/>
<dbReference type="VEuPathDB" id="ToxoDB:TGVAND_232250A"/>
<dbReference type="VEuPathDB" id="ToxoDB:TGVEG_232250"/>
<dbReference type="GO" id="GO:0005739">
    <property type="term" value="C:mitochondrion"/>
    <property type="evidence" value="ECO:0007669"/>
    <property type="project" value="TreeGrafter"/>
</dbReference>
<dbReference type="GO" id="GO:0005782">
    <property type="term" value="C:peroxisomal matrix"/>
    <property type="evidence" value="ECO:0007669"/>
    <property type="project" value="UniProtKB-SubCell"/>
</dbReference>
<dbReference type="GO" id="GO:0004096">
    <property type="term" value="F:catalase activity"/>
    <property type="evidence" value="ECO:0007669"/>
    <property type="project" value="UniProtKB-EC"/>
</dbReference>
<dbReference type="GO" id="GO:0020037">
    <property type="term" value="F:heme binding"/>
    <property type="evidence" value="ECO:0007669"/>
    <property type="project" value="InterPro"/>
</dbReference>
<dbReference type="GO" id="GO:0046872">
    <property type="term" value="F:metal ion binding"/>
    <property type="evidence" value="ECO:0007669"/>
    <property type="project" value="UniProtKB-KW"/>
</dbReference>
<dbReference type="GO" id="GO:0042744">
    <property type="term" value="P:hydrogen peroxide catabolic process"/>
    <property type="evidence" value="ECO:0007669"/>
    <property type="project" value="UniProtKB-KW"/>
</dbReference>
<dbReference type="GO" id="GO:0042542">
    <property type="term" value="P:response to hydrogen peroxide"/>
    <property type="evidence" value="ECO:0007669"/>
    <property type="project" value="TreeGrafter"/>
</dbReference>
<dbReference type="CDD" id="cd08156">
    <property type="entry name" value="catalase_clade_3"/>
    <property type="match status" value="1"/>
</dbReference>
<dbReference type="FunFam" id="2.40.180.10:FF:000001">
    <property type="entry name" value="Catalase"/>
    <property type="match status" value="1"/>
</dbReference>
<dbReference type="Gene3D" id="2.40.180.10">
    <property type="entry name" value="Catalase core domain"/>
    <property type="match status" value="1"/>
</dbReference>
<dbReference type="InterPro" id="IPR018028">
    <property type="entry name" value="Catalase"/>
</dbReference>
<dbReference type="InterPro" id="IPR040333">
    <property type="entry name" value="Catalase_3"/>
</dbReference>
<dbReference type="InterPro" id="IPR024708">
    <property type="entry name" value="Catalase_AS"/>
</dbReference>
<dbReference type="InterPro" id="IPR024711">
    <property type="entry name" value="Catalase_clade1/3"/>
</dbReference>
<dbReference type="InterPro" id="IPR011614">
    <property type="entry name" value="Catalase_core"/>
</dbReference>
<dbReference type="InterPro" id="IPR002226">
    <property type="entry name" value="Catalase_haem_BS"/>
</dbReference>
<dbReference type="InterPro" id="IPR010582">
    <property type="entry name" value="Catalase_immune_responsive"/>
</dbReference>
<dbReference type="InterPro" id="IPR020835">
    <property type="entry name" value="Catalase_sf"/>
</dbReference>
<dbReference type="PANTHER" id="PTHR11465">
    <property type="entry name" value="CATALASE"/>
    <property type="match status" value="1"/>
</dbReference>
<dbReference type="PANTHER" id="PTHR11465:SF9">
    <property type="entry name" value="CATALASE"/>
    <property type="match status" value="1"/>
</dbReference>
<dbReference type="Pfam" id="PF00199">
    <property type="entry name" value="Catalase"/>
    <property type="match status" value="1"/>
</dbReference>
<dbReference type="Pfam" id="PF06628">
    <property type="entry name" value="Catalase-rel"/>
    <property type="match status" value="1"/>
</dbReference>
<dbReference type="PIRSF" id="PIRSF038928">
    <property type="entry name" value="Catalase_clade1-3"/>
    <property type="match status" value="1"/>
</dbReference>
<dbReference type="PRINTS" id="PR00067">
    <property type="entry name" value="CATALASE"/>
</dbReference>
<dbReference type="SMART" id="SM01060">
    <property type="entry name" value="Catalase"/>
    <property type="match status" value="1"/>
</dbReference>
<dbReference type="SUPFAM" id="SSF56634">
    <property type="entry name" value="Heme-dependent catalase-like"/>
    <property type="match status" value="1"/>
</dbReference>
<dbReference type="PROSITE" id="PS00437">
    <property type="entry name" value="CATALASE_1"/>
    <property type="match status" value="1"/>
</dbReference>
<dbReference type="PROSITE" id="PS00438">
    <property type="entry name" value="CATALASE_2"/>
    <property type="match status" value="1"/>
</dbReference>
<dbReference type="PROSITE" id="PS51402">
    <property type="entry name" value="CATALASE_3"/>
    <property type="match status" value="1"/>
</dbReference>
<sequence length="502" mass="57270">MTQVPPVTFQQYGPVITTSAGNPVDDNQNSVTAGPYGPAILSNFHLIDKLAHFDRERIPERVVHAKGGGAFGYFEVTHDITRFCKAKLFEKIGKRTPVFARFSTVAGESGSADTRRDPRGFALKFYTEEGNWDMVGNNTPIFFVRDAIKFPDFIHTQKRHPQTHLHDPNMVWDFFSLVPESVHQVTFLYTDRGTPDGFRHMNGYGSHTFKFINKDNEAFYVKWHFKTNQGIKNLNRQRAKELESEDPDYAVRDLFNAIAKREFPSWTFCIQVMPLKDAETYKWNVFDVTKVWPHGDYPLIPVGKLVLDRNPENYFQDVEQAAFAPAHMVPGIEPSEDRMLQGRMFSYIDTHRHRLGANYHQIPVNRPWNARGGDYSVRDGPMCVDGNKGSQLNYEPNSVDGFPKEDRNAAVSGTTTVSGTVACHPQEHPNSDFEQPGNFYRTVLSEPEREALIGNIAEHLRQARRDIQERQVKIFYKCDPEYGERVARAIGLPTAACYPAKM</sequence>
<protein>
    <recommendedName>
        <fullName>Peroxisomal catalase</fullName>
        <ecNumber evidence="4">1.11.1.6</ecNumber>
    </recommendedName>
</protein>
<accession>Q9XZD5</accession>
<evidence type="ECO:0000250" key="1">
    <source>
        <dbReference type="UniProtKB" id="P04040"/>
    </source>
</evidence>
<evidence type="ECO:0000250" key="2">
    <source>
        <dbReference type="UniProtKB" id="P15202"/>
    </source>
</evidence>
<evidence type="ECO:0000255" key="3"/>
<evidence type="ECO:0000255" key="4">
    <source>
        <dbReference type="PROSITE-ProRule" id="PRU10013"/>
    </source>
</evidence>
<evidence type="ECO:0000305" key="5"/>
<name>CATA_TOXGO</name>
<comment type="function">
    <text evidence="1">Catalyzes the degradation of hydrogen peroxide (H(2)O(2)) generated by peroxisomal oxidases to water and oxygen, thereby protecting cells from the toxic effects of hydrogen peroxide.</text>
</comment>
<comment type="catalytic activity">
    <reaction evidence="4">
        <text>2 H2O2 = O2 + 2 H2O</text>
        <dbReference type="Rhea" id="RHEA:20309"/>
        <dbReference type="ChEBI" id="CHEBI:15377"/>
        <dbReference type="ChEBI" id="CHEBI:15379"/>
        <dbReference type="ChEBI" id="CHEBI:16240"/>
        <dbReference type="EC" id="1.11.1.6"/>
    </reaction>
</comment>
<comment type="cofactor">
    <cofactor evidence="2">
        <name>heme</name>
        <dbReference type="ChEBI" id="CHEBI:30413"/>
    </cofactor>
</comment>
<comment type="subcellular location">
    <subcellularLocation>
        <location evidence="2">Peroxisome matrix</location>
    </subcellularLocation>
</comment>
<comment type="similarity">
    <text evidence="5">Belongs to the catalase family.</text>
</comment>